<feature type="chain" id="PRO_1000065572" description="DnaA regulatory inactivator Hda">
    <location>
        <begin position="1"/>
        <end position="235"/>
    </location>
</feature>
<comment type="function">
    <text evidence="1">Mediates the interaction of DNA replication initiator protein DnaA with DNA polymerase subunit beta sliding clamp (dnaN). Stimulates hydrolysis of ATP-DnaA to ADP-DnaA, rendering DnaA inactive for reinitiation, a process called regulatory inhibition of DnaA or RIDA (By similarity).</text>
</comment>
<comment type="subunit">
    <text evidence="2">The active form seems to be an ADP-bound monomer. Forms the RIDA complex (regulatory inactivation of DnaA) of ATP-DnaA, ADP-Hda and the DNA-loaded beta sliding clamp (dnaN).</text>
</comment>
<comment type="similarity">
    <text evidence="2">Belongs to the DnaA family. HdA subfamily.</text>
</comment>
<protein>
    <recommendedName>
        <fullName evidence="2">DnaA regulatory inactivator Hda</fullName>
    </recommendedName>
</protein>
<name>HDA_YERPN</name>
<sequence length="235" mass="26703">MLLNTPAQLSLPLYLPDDETFASFYPGENPSLLAAIQSAVHQPHGSYIYFWSREGGGRSHLLHAACAELSQQGEAVGYVPLDKRAYFIPEVLEGMEQLALVCIDNIECIAGDEQWEMAMFNLYNRIVETGRTRLLITGDRPPRQLNLGLPDLASRLDWGQIYKLQPLSDDEKLQALQLRAKLRGFELPEDVGRFLLKRLDREMRTLFMTLDQLDRASITAQRKLTIPFVKEILSL</sequence>
<evidence type="ECO:0000250" key="1"/>
<evidence type="ECO:0000255" key="2">
    <source>
        <dbReference type="HAMAP-Rule" id="MF_01158"/>
    </source>
</evidence>
<accession>Q1CK37</accession>
<accession>C4GRR9</accession>
<dbReference type="EMBL" id="CP000305">
    <property type="protein sequence ID" value="ABG17643.1"/>
    <property type="molecule type" value="Genomic_DNA"/>
</dbReference>
<dbReference type="EMBL" id="ACNQ01000008">
    <property type="protein sequence ID" value="EEO77760.1"/>
    <property type="molecule type" value="Genomic_DNA"/>
</dbReference>
<dbReference type="RefSeq" id="WP_002228401.1">
    <property type="nucleotide sequence ID" value="NZ_ACNQ01000008.1"/>
</dbReference>
<dbReference type="SMR" id="Q1CK37"/>
<dbReference type="GeneID" id="96666285"/>
<dbReference type="KEGG" id="ypn:YPN_1313"/>
<dbReference type="HOGENOM" id="CLU_072265_1_1_6"/>
<dbReference type="Proteomes" id="UP000008936">
    <property type="component" value="Chromosome"/>
</dbReference>
<dbReference type="GO" id="GO:0006270">
    <property type="term" value="P:DNA replication initiation"/>
    <property type="evidence" value="ECO:0007669"/>
    <property type="project" value="TreeGrafter"/>
</dbReference>
<dbReference type="GO" id="GO:0032297">
    <property type="term" value="P:negative regulation of DNA-templated DNA replication initiation"/>
    <property type="evidence" value="ECO:0007669"/>
    <property type="project" value="InterPro"/>
</dbReference>
<dbReference type="FunFam" id="1.10.8.60:FF:000024">
    <property type="entry name" value="DnaA regulatory inactivator Hda"/>
    <property type="match status" value="1"/>
</dbReference>
<dbReference type="FunFam" id="3.40.50.300:FF:000452">
    <property type="entry name" value="DnaA regulatory inactivator Hda"/>
    <property type="match status" value="1"/>
</dbReference>
<dbReference type="Gene3D" id="1.10.8.60">
    <property type="match status" value="1"/>
</dbReference>
<dbReference type="Gene3D" id="3.40.50.300">
    <property type="entry name" value="P-loop containing nucleotide triphosphate hydrolases"/>
    <property type="match status" value="1"/>
</dbReference>
<dbReference type="HAMAP" id="MF_01158">
    <property type="entry name" value="Hda"/>
    <property type="match status" value="1"/>
</dbReference>
<dbReference type="InterPro" id="IPR020591">
    <property type="entry name" value="Chromosome_initiator_DnaA-like"/>
</dbReference>
<dbReference type="InterPro" id="IPR013317">
    <property type="entry name" value="DnaA_dom"/>
</dbReference>
<dbReference type="InterPro" id="IPR017788">
    <property type="entry name" value="Hda"/>
</dbReference>
<dbReference type="InterPro" id="IPR022864">
    <property type="entry name" value="Hda_Enterobact"/>
</dbReference>
<dbReference type="InterPro" id="IPR055199">
    <property type="entry name" value="Hda_lid"/>
</dbReference>
<dbReference type="InterPro" id="IPR027417">
    <property type="entry name" value="P-loop_NTPase"/>
</dbReference>
<dbReference type="NCBIfam" id="TIGR03420">
    <property type="entry name" value="DnaA_homol_Hda"/>
    <property type="match status" value="1"/>
</dbReference>
<dbReference type="NCBIfam" id="NF005982">
    <property type="entry name" value="PRK08084.1"/>
    <property type="match status" value="1"/>
</dbReference>
<dbReference type="PANTHER" id="PTHR30050">
    <property type="entry name" value="CHROMOSOMAL REPLICATION INITIATOR PROTEIN DNAA"/>
    <property type="match status" value="1"/>
</dbReference>
<dbReference type="PANTHER" id="PTHR30050:SF5">
    <property type="entry name" value="DNAA REGULATORY INACTIVATOR HDA"/>
    <property type="match status" value="1"/>
</dbReference>
<dbReference type="Pfam" id="PF00308">
    <property type="entry name" value="Bac_DnaA"/>
    <property type="match status" value="1"/>
</dbReference>
<dbReference type="Pfam" id="PF22688">
    <property type="entry name" value="Hda_lid"/>
    <property type="match status" value="1"/>
</dbReference>
<dbReference type="PRINTS" id="PR00051">
    <property type="entry name" value="DNAA"/>
</dbReference>
<dbReference type="SUPFAM" id="SSF52540">
    <property type="entry name" value="P-loop containing nucleoside triphosphate hydrolases"/>
    <property type="match status" value="1"/>
</dbReference>
<proteinExistence type="inferred from homology"/>
<organism>
    <name type="scientific">Yersinia pestis bv. Antiqua (strain Nepal516)</name>
    <dbReference type="NCBI Taxonomy" id="377628"/>
    <lineage>
        <taxon>Bacteria</taxon>
        <taxon>Pseudomonadati</taxon>
        <taxon>Pseudomonadota</taxon>
        <taxon>Gammaproteobacteria</taxon>
        <taxon>Enterobacterales</taxon>
        <taxon>Yersiniaceae</taxon>
        <taxon>Yersinia</taxon>
    </lineage>
</organism>
<gene>
    <name evidence="2" type="primary">hda</name>
    <name type="ordered locus">YPN_1313</name>
    <name type="ORF">YP516_1446</name>
</gene>
<keyword id="KW-0235">DNA replication</keyword>
<keyword id="KW-0236">DNA replication inhibitor</keyword>
<reference key="1">
    <citation type="journal article" date="2006" name="J. Bacteriol.">
        <title>Complete genome sequence of Yersinia pestis strains Antiqua and Nepal516: evidence of gene reduction in an emerging pathogen.</title>
        <authorList>
            <person name="Chain P.S.G."/>
            <person name="Hu P."/>
            <person name="Malfatti S.A."/>
            <person name="Radnedge L."/>
            <person name="Larimer F."/>
            <person name="Vergez L.M."/>
            <person name="Worsham P."/>
            <person name="Chu M.C."/>
            <person name="Andersen G.L."/>
        </authorList>
    </citation>
    <scope>NUCLEOTIDE SEQUENCE [LARGE SCALE GENOMIC DNA]</scope>
    <source>
        <strain>Nepal516</strain>
    </source>
</reference>
<reference key="2">
    <citation type="submission" date="2009-04" db="EMBL/GenBank/DDBJ databases">
        <title>Yersinia pestis Nepal516A whole genome shotgun sequencing project.</title>
        <authorList>
            <person name="Plunkett G. III"/>
            <person name="Anderson B.D."/>
            <person name="Baumler D.J."/>
            <person name="Burland V."/>
            <person name="Cabot E.L."/>
            <person name="Glasner J.D."/>
            <person name="Mau B."/>
            <person name="Neeno-Eckwall E."/>
            <person name="Perna N.T."/>
            <person name="Munk A.C."/>
            <person name="Tapia R."/>
            <person name="Green L.D."/>
            <person name="Rogers Y.C."/>
            <person name="Detter J.C."/>
            <person name="Bruce D.C."/>
            <person name="Brettin T.S."/>
        </authorList>
    </citation>
    <scope>NUCLEOTIDE SEQUENCE [LARGE SCALE GENOMIC DNA]</scope>
    <source>
        <strain>Nepal516</strain>
    </source>
</reference>